<name>REP10_ECOLX</name>
<evidence type="ECO:0000250" key="1"/>
<evidence type="ECO:0000256" key="2">
    <source>
        <dbReference type="SAM" id="MobiDB-lite"/>
    </source>
</evidence>
<evidence type="ECO:0000305" key="3"/>
<feature type="chain" id="PRO_0000068304" description="RepFIB replication protein A">
    <location>
        <begin position="1"/>
        <end position="325"/>
    </location>
</feature>
<feature type="region of interest" description="Disordered" evidence="2">
    <location>
        <begin position="279"/>
        <end position="298"/>
    </location>
</feature>
<keyword id="KW-0235">DNA replication</keyword>
<keyword id="KW-0238">DNA-binding</keyword>
<keyword id="KW-0614">Plasmid</keyword>
<keyword id="KW-0615">Plasmid copy control</keyword>
<gene>
    <name type="primary">repA</name>
</gene>
<protein>
    <recommendedName>
        <fullName>RepFIB replication protein A</fullName>
    </recommendedName>
</protein>
<reference key="1">
    <citation type="journal article" date="1993" name="Plasmid">
        <title>RepFIB: a basic replicon of large plasmids.</title>
        <authorList>
            <person name="Gibbs M.D."/>
            <person name="Spiers A.J."/>
            <person name="Bergquist P.L."/>
        </authorList>
    </citation>
    <scope>NUCLEOTIDE SEQUENCE [GENOMIC DNA]</scope>
</reference>
<sequence>MDKSSGELVTLTPNNNNTVQPVALMRLGVFVPTLKSLKNSKKNTLSRTDATEELTRLSLARAEGFDKVEITGPRLDMDNDFKTWVGIIHSFARHNVIGDKVELPFVEFAKLCGIPSSQSSRRLRERISPSLKRIAGTVISFSRTDEKHTREYITHLVQSAYYDTERDIVQLQADPRLFELYQFDRKVLLQLKAINALKRRESAQALYTFIESLPRDPAPISLARLRARLNLKSPVFSQNQTVRRAMEQLREIGYLDYTEIQRGRTKLFCIHYRRPRLKAPNDESKENPLPPSPAEKVSPEMAEKLALLEKLGITLDDLEKLFKSR</sequence>
<geneLocation type="plasmid">
    <name>IncFI pHH507</name>
</geneLocation>
<dbReference type="EMBL" id="L01252">
    <property type="protein sequence ID" value="AAA71882.1"/>
    <property type="molecule type" value="Unassigned_DNA"/>
</dbReference>
<dbReference type="RefSeq" id="WP_000361612.1">
    <property type="nucleotide sequence ID" value="NZ_WVVQ01000051.1"/>
</dbReference>
<dbReference type="RefSeq" id="YP_788007.1">
    <property type="nucleotide sequence ID" value="NC_008460.1"/>
</dbReference>
<dbReference type="GO" id="GO:0003677">
    <property type="term" value="F:DNA binding"/>
    <property type="evidence" value="ECO:0007669"/>
    <property type="project" value="UniProtKB-KW"/>
</dbReference>
<dbReference type="GO" id="GO:0003887">
    <property type="term" value="F:DNA-directed DNA polymerase activity"/>
    <property type="evidence" value="ECO:0007669"/>
    <property type="project" value="InterPro"/>
</dbReference>
<dbReference type="GO" id="GO:0006270">
    <property type="term" value="P:DNA replication initiation"/>
    <property type="evidence" value="ECO:0007669"/>
    <property type="project" value="InterPro"/>
</dbReference>
<dbReference type="GO" id="GO:0006276">
    <property type="term" value="P:plasmid maintenance"/>
    <property type="evidence" value="ECO:0007669"/>
    <property type="project" value="UniProtKB-KW"/>
</dbReference>
<dbReference type="Gene3D" id="1.10.10.10">
    <property type="entry name" value="Winged helix-like DNA-binding domain superfamily/Winged helix DNA-binding domain"/>
    <property type="match status" value="1"/>
</dbReference>
<dbReference type="InterPro" id="IPR000525">
    <property type="entry name" value="Initiator_Rep_WH1"/>
</dbReference>
<dbReference type="InterPro" id="IPR036388">
    <property type="entry name" value="WH-like_DNA-bd_sf"/>
</dbReference>
<dbReference type="Pfam" id="PF01051">
    <property type="entry name" value="Rep3_N"/>
    <property type="match status" value="1"/>
</dbReference>
<proteinExistence type="inferred from homology"/>
<comment type="function">
    <text evidence="1">This protein is essential for plasmid replication; it is involved in copy control functions. In vitro, binds to the DNA repeat units, BCDD'D'', EFG and HIJ (By similarity).</text>
</comment>
<comment type="similarity">
    <text evidence="3">Belongs to the initiator RepB protein family.</text>
</comment>
<accession>Q52219</accession>
<organism>
    <name type="scientific">Escherichia coli</name>
    <dbReference type="NCBI Taxonomy" id="562"/>
    <lineage>
        <taxon>Bacteria</taxon>
        <taxon>Pseudomonadati</taxon>
        <taxon>Pseudomonadota</taxon>
        <taxon>Gammaproteobacteria</taxon>
        <taxon>Enterobacterales</taxon>
        <taxon>Enterobacteriaceae</taxon>
        <taxon>Escherichia</taxon>
    </lineage>
</organism>